<protein>
    <recommendedName>
        <fullName evidence="1">Tyrosine--tRNA ligase</fullName>
        <ecNumber evidence="1">6.1.1.1</ecNumber>
    </recommendedName>
    <alternativeName>
        <fullName evidence="1">Tyrosyl-tRNA synthetase</fullName>
        <shortName evidence="1">TyrRS</shortName>
    </alternativeName>
</protein>
<dbReference type="EC" id="6.1.1.1" evidence="1"/>
<dbReference type="EMBL" id="CP000412">
    <property type="protein sequence ID" value="ABJ57895.1"/>
    <property type="molecule type" value="Genomic_DNA"/>
</dbReference>
<dbReference type="RefSeq" id="WP_011677971.1">
    <property type="nucleotide sequence ID" value="NC_008529.1"/>
</dbReference>
<dbReference type="SMR" id="Q04CC7"/>
<dbReference type="KEGG" id="lbu:LBUL_0219"/>
<dbReference type="HOGENOM" id="CLU_024003_0_3_9"/>
<dbReference type="BioCyc" id="LDEL321956:LBUL_RS01020-MONOMER"/>
<dbReference type="GO" id="GO:0005829">
    <property type="term" value="C:cytosol"/>
    <property type="evidence" value="ECO:0007669"/>
    <property type="project" value="TreeGrafter"/>
</dbReference>
<dbReference type="GO" id="GO:0005524">
    <property type="term" value="F:ATP binding"/>
    <property type="evidence" value="ECO:0007669"/>
    <property type="project" value="UniProtKB-UniRule"/>
</dbReference>
<dbReference type="GO" id="GO:0003723">
    <property type="term" value="F:RNA binding"/>
    <property type="evidence" value="ECO:0007669"/>
    <property type="project" value="UniProtKB-KW"/>
</dbReference>
<dbReference type="GO" id="GO:0004831">
    <property type="term" value="F:tyrosine-tRNA ligase activity"/>
    <property type="evidence" value="ECO:0007669"/>
    <property type="project" value="UniProtKB-UniRule"/>
</dbReference>
<dbReference type="GO" id="GO:0006437">
    <property type="term" value="P:tyrosyl-tRNA aminoacylation"/>
    <property type="evidence" value="ECO:0007669"/>
    <property type="project" value="UniProtKB-UniRule"/>
</dbReference>
<dbReference type="CDD" id="cd00165">
    <property type="entry name" value="S4"/>
    <property type="match status" value="1"/>
</dbReference>
<dbReference type="CDD" id="cd00805">
    <property type="entry name" value="TyrRS_core"/>
    <property type="match status" value="1"/>
</dbReference>
<dbReference type="FunFam" id="1.10.240.10:FF:000001">
    <property type="entry name" value="Tyrosine--tRNA ligase"/>
    <property type="match status" value="1"/>
</dbReference>
<dbReference type="Gene3D" id="3.40.50.620">
    <property type="entry name" value="HUPs"/>
    <property type="match status" value="1"/>
</dbReference>
<dbReference type="Gene3D" id="3.10.290.10">
    <property type="entry name" value="RNA-binding S4 domain"/>
    <property type="match status" value="1"/>
</dbReference>
<dbReference type="Gene3D" id="1.10.240.10">
    <property type="entry name" value="Tyrosyl-Transfer RNA Synthetase"/>
    <property type="match status" value="1"/>
</dbReference>
<dbReference type="HAMAP" id="MF_02006">
    <property type="entry name" value="Tyr_tRNA_synth_type1"/>
    <property type="match status" value="1"/>
</dbReference>
<dbReference type="InterPro" id="IPR001412">
    <property type="entry name" value="aa-tRNA-synth_I_CS"/>
</dbReference>
<dbReference type="InterPro" id="IPR002305">
    <property type="entry name" value="aa-tRNA-synth_Ic"/>
</dbReference>
<dbReference type="InterPro" id="IPR014729">
    <property type="entry name" value="Rossmann-like_a/b/a_fold"/>
</dbReference>
<dbReference type="InterPro" id="IPR036986">
    <property type="entry name" value="S4_RNA-bd_sf"/>
</dbReference>
<dbReference type="InterPro" id="IPR054608">
    <property type="entry name" value="SYY-like_C"/>
</dbReference>
<dbReference type="InterPro" id="IPR002307">
    <property type="entry name" value="Tyr-tRNA-ligase"/>
</dbReference>
<dbReference type="InterPro" id="IPR024088">
    <property type="entry name" value="Tyr-tRNA-ligase_bac-type"/>
</dbReference>
<dbReference type="InterPro" id="IPR024107">
    <property type="entry name" value="Tyr-tRNA-ligase_bac_1"/>
</dbReference>
<dbReference type="NCBIfam" id="TIGR00234">
    <property type="entry name" value="tyrS"/>
    <property type="match status" value="1"/>
</dbReference>
<dbReference type="PANTHER" id="PTHR11766:SF0">
    <property type="entry name" value="TYROSINE--TRNA LIGASE, MITOCHONDRIAL"/>
    <property type="match status" value="1"/>
</dbReference>
<dbReference type="PANTHER" id="PTHR11766">
    <property type="entry name" value="TYROSYL-TRNA SYNTHETASE"/>
    <property type="match status" value="1"/>
</dbReference>
<dbReference type="Pfam" id="PF22421">
    <property type="entry name" value="SYY_C-terminal"/>
    <property type="match status" value="1"/>
</dbReference>
<dbReference type="Pfam" id="PF00579">
    <property type="entry name" value="tRNA-synt_1b"/>
    <property type="match status" value="1"/>
</dbReference>
<dbReference type="PRINTS" id="PR01040">
    <property type="entry name" value="TRNASYNTHTYR"/>
</dbReference>
<dbReference type="SUPFAM" id="SSF55174">
    <property type="entry name" value="Alpha-L RNA-binding motif"/>
    <property type="match status" value="1"/>
</dbReference>
<dbReference type="SUPFAM" id="SSF52374">
    <property type="entry name" value="Nucleotidylyl transferase"/>
    <property type="match status" value="1"/>
</dbReference>
<dbReference type="PROSITE" id="PS00178">
    <property type="entry name" value="AA_TRNA_LIGASE_I"/>
    <property type="match status" value="1"/>
</dbReference>
<dbReference type="PROSITE" id="PS50889">
    <property type="entry name" value="S4"/>
    <property type="match status" value="1"/>
</dbReference>
<feature type="chain" id="PRO_1000088596" description="Tyrosine--tRNA ligase">
    <location>
        <begin position="1"/>
        <end position="421"/>
    </location>
</feature>
<feature type="domain" description="S4 RNA-binding" evidence="1">
    <location>
        <begin position="353"/>
        <end position="419"/>
    </location>
</feature>
<feature type="short sequence motif" description="'HIGH' region">
    <location>
        <begin position="43"/>
        <end position="52"/>
    </location>
</feature>
<feature type="short sequence motif" description="'KMSKS' region">
    <location>
        <begin position="231"/>
        <end position="235"/>
    </location>
</feature>
<feature type="binding site" evidence="1">
    <location>
        <position position="38"/>
    </location>
    <ligand>
        <name>L-tyrosine</name>
        <dbReference type="ChEBI" id="CHEBI:58315"/>
    </ligand>
</feature>
<feature type="binding site" evidence="1">
    <location>
        <position position="169"/>
    </location>
    <ligand>
        <name>L-tyrosine</name>
        <dbReference type="ChEBI" id="CHEBI:58315"/>
    </ligand>
</feature>
<feature type="binding site" evidence="1">
    <location>
        <position position="173"/>
    </location>
    <ligand>
        <name>L-tyrosine</name>
        <dbReference type="ChEBI" id="CHEBI:58315"/>
    </ligand>
</feature>
<feature type="binding site" evidence="1">
    <location>
        <position position="234"/>
    </location>
    <ligand>
        <name>ATP</name>
        <dbReference type="ChEBI" id="CHEBI:30616"/>
    </ligand>
</feature>
<name>SYY_LACDB</name>
<gene>
    <name evidence="1" type="primary">tyrS</name>
    <name type="ordered locus">LBUL_0219</name>
</gene>
<proteinExistence type="inferred from homology"/>
<keyword id="KW-0030">Aminoacyl-tRNA synthetase</keyword>
<keyword id="KW-0067">ATP-binding</keyword>
<keyword id="KW-0963">Cytoplasm</keyword>
<keyword id="KW-0436">Ligase</keyword>
<keyword id="KW-0547">Nucleotide-binding</keyword>
<keyword id="KW-0648">Protein biosynthesis</keyword>
<keyword id="KW-0694">RNA-binding</keyword>
<evidence type="ECO:0000255" key="1">
    <source>
        <dbReference type="HAMAP-Rule" id="MF_02006"/>
    </source>
</evidence>
<sequence length="421" mass="47562">MANFDILEDLKWRGAINQETDEEGLRDYLAKHDDLALYCGTDPTGDSLHIGHLIPFMILKRFQLAGYKPVIVIGGGTGSIGDPSGRSTERVLQSEETIKHNEEALTAQMVKLFGTENFRIVNNRDWLGKMNLLEFLRDYGKLFQVNNMLNKEVVASRLKNGISFTEFSYQILQAIDFYILNRDHGVQMQIGGADQWGNITAGIDLIHRLEGADRPAFGLTIPLMLKADGTKFGKSAGGAVWLDPEKTSPYEFYQFWINQDDRDVIKYLKYFTFLKHEEIDALEEKVKTEPWKREAQKRLAEEVTKFVHGEEGLKEAQTVTEALFSGNVKDLTTKQVEIALAKAPSAESGEEKKNLVDFLVDTKIESSKRQAREDVNNGAIYVNGDRIQDTDFEVDPAAAFDGKFVIIRKGKKKYTLVHIKG</sequence>
<reference key="1">
    <citation type="journal article" date="2006" name="Proc. Natl. Acad. Sci. U.S.A.">
        <title>Comparative genomics of the lactic acid bacteria.</title>
        <authorList>
            <person name="Makarova K.S."/>
            <person name="Slesarev A."/>
            <person name="Wolf Y.I."/>
            <person name="Sorokin A."/>
            <person name="Mirkin B."/>
            <person name="Koonin E.V."/>
            <person name="Pavlov A."/>
            <person name="Pavlova N."/>
            <person name="Karamychev V."/>
            <person name="Polouchine N."/>
            <person name="Shakhova V."/>
            <person name="Grigoriev I."/>
            <person name="Lou Y."/>
            <person name="Rohksar D."/>
            <person name="Lucas S."/>
            <person name="Huang K."/>
            <person name="Goodstein D.M."/>
            <person name="Hawkins T."/>
            <person name="Plengvidhya V."/>
            <person name="Welker D."/>
            <person name="Hughes J."/>
            <person name="Goh Y."/>
            <person name="Benson A."/>
            <person name="Baldwin K."/>
            <person name="Lee J.-H."/>
            <person name="Diaz-Muniz I."/>
            <person name="Dosti B."/>
            <person name="Smeianov V."/>
            <person name="Wechter W."/>
            <person name="Barabote R."/>
            <person name="Lorca G."/>
            <person name="Altermann E."/>
            <person name="Barrangou R."/>
            <person name="Ganesan B."/>
            <person name="Xie Y."/>
            <person name="Rawsthorne H."/>
            <person name="Tamir D."/>
            <person name="Parker C."/>
            <person name="Breidt F."/>
            <person name="Broadbent J.R."/>
            <person name="Hutkins R."/>
            <person name="O'Sullivan D."/>
            <person name="Steele J."/>
            <person name="Unlu G."/>
            <person name="Saier M.H. Jr."/>
            <person name="Klaenhammer T."/>
            <person name="Richardson P."/>
            <person name="Kozyavkin S."/>
            <person name="Weimer B.C."/>
            <person name="Mills D.A."/>
        </authorList>
    </citation>
    <scope>NUCLEOTIDE SEQUENCE [LARGE SCALE GENOMIC DNA]</scope>
    <source>
        <strain>ATCC BAA-365 / Lb-18</strain>
    </source>
</reference>
<comment type="function">
    <text evidence="1">Catalyzes the attachment of tyrosine to tRNA(Tyr) in a two-step reaction: tyrosine is first activated by ATP to form Tyr-AMP and then transferred to the acceptor end of tRNA(Tyr).</text>
</comment>
<comment type="catalytic activity">
    <reaction evidence="1">
        <text>tRNA(Tyr) + L-tyrosine + ATP = L-tyrosyl-tRNA(Tyr) + AMP + diphosphate + H(+)</text>
        <dbReference type="Rhea" id="RHEA:10220"/>
        <dbReference type="Rhea" id="RHEA-COMP:9706"/>
        <dbReference type="Rhea" id="RHEA-COMP:9707"/>
        <dbReference type="ChEBI" id="CHEBI:15378"/>
        <dbReference type="ChEBI" id="CHEBI:30616"/>
        <dbReference type="ChEBI" id="CHEBI:33019"/>
        <dbReference type="ChEBI" id="CHEBI:58315"/>
        <dbReference type="ChEBI" id="CHEBI:78442"/>
        <dbReference type="ChEBI" id="CHEBI:78536"/>
        <dbReference type="ChEBI" id="CHEBI:456215"/>
        <dbReference type="EC" id="6.1.1.1"/>
    </reaction>
</comment>
<comment type="subunit">
    <text evidence="1">Homodimer.</text>
</comment>
<comment type="subcellular location">
    <subcellularLocation>
        <location evidence="1">Cytoplasm</location>
    </subcellularLocation>
</comment>
<comment type="similarity">
    <text evidence="1">Belongs to the class-I aminoacyl-tRNA synthetase family. TyrS type 1 subfamily.</text>
</comment>
<accession>Q04CC7</accession>
<organism>
    <name type="scientific">Lactobacillus delbrueckii subsp. bulgaricus (strain ATCC BAA-365 / Lb-18)</name>
    <dbReference type="NCBI Taxonomy" id="321956"/>
    <lineage>
        <taxon>Bacteria</taxon>
        <taxon>Bacillati</taxon>
        <taxon>Bacillota</taxon>
        <taxon>Bacilli</taxon>
        <taxon>Lactobacillales</taxon>
        <taxon>Lactobacillaceae</taxon>
        <taxon>Lactobacillus</taxon>
    </lineage>
</organism>